<accession>Q824W7</accession>
<name>KDSA_CHLCV</name>
<protein>
    <recommendedName>
        <fullName evidence="1">2-dehydro-3-deoxyphosphooctonate aldolase</fullName>
        <ecNumber evidence="1">2.5.1.55</ecNumber>
    </recommendedName>
    <alternativeName>
        <fullName evidence="1">3-deoxy-D-manno-octulosonic acid 8-phosphate synthase</fullName>
    </alternativeName>
    <alternativeName>
        <fullName evidence="1">KDO-8-phosphate synthase</fullName>
        <shortName evidence="1">KDO 8-P synthase</shortName>
        <shortName evidence="1">KDOPS</shortName>
    </alternativeName>
    <alternativeName>
        <fullName evidence="1">Phospho-2-dehydro-3-deoxyoctonate aldolase</fullName>
    </alternativeName>
</protein>
<feature type="chain" id="PRO_0000187115" description="2-dehydro-3-deoxyphosphooctonate aldolase">
    <location>
        <begin position="1"/>
        <end position="269"/>
    </location>
</feature>
<proteinExistence type="inferred from homology"/>
<sequence>MFSDKMILIAGPCVIEEEETTLEIASRIQELVTPYADRIHWIFKSSYDKANRSSINSYRGPGLNEGLRILSKVKDTLGVEILTDVHSPEEARAAAKVCDILQIPAFLCRQTDLLVAAAETNAVINIKKGQFLSPWDMQGPVDKVLSTGNNKIILTERGCSFGYNNLVSDMRSIPVLSGMGFPVVFDGTHSVQLPGGLKTHSGGQTEFIPTLTRAALAAGAHGLFIETHANPAIAKSDAASMLSLKTFEALLPLWDQLYTCVRSFEMASV</sequence>
<keyword id="KW-0963">Cytoplasm</keyword>
<keyword id="KW-0448">Lipopolysaccharide biosynthesis</keyword>
<keyword id="KW-0808">Transferase</keyword>
<evidence type="ECO:0000255" key="1">
    <source>
        <dbReference type="HAMAP-Rule" id="MF_00056"/>
    </source>
</evidence>
<dbReference type="EC" id="2.5.1.55" evidence="1"/>
<dbReference type="EMBL" id="AE015925">
    <property type="protein sequence ID" value="AAP04774.1"/>
    <property type="molecule type" value="Genomic_DNA"/>
</dbReference>
<dbReference type="RefSeq" id="WP_011005995.1">
    <property type="nucleotide sequence ID" value="NC_003361.3"/>
</dbReference>
<dbReference type="SMR" id="Q824W7"/>
<dbReference type="STRING" id="227941.CCA_00021"/>
<dbReference type="KEGG" id="cca:CCA_00021"/>
<dbReference type="eggNOG" id="COG2877">
    <property type="taxonomic scope" value="Bacteria"/>
</dbReference>
<dbReference type="HOGENOM" id="CLU_036666_0_0_0"/>
<dbReference type="OrthoDB" id="9780456at2"/>
<dbReference type="UniPathway" id="UPA00030"/>
<dbReference type="UniPathway" id="UPA00357">
    <property type="reaction ID" value="UER00474"/>
</dbReference>
<dbReference type="Proteomes" id="UP000002193">
    <property type="component" value="Chromosome"/>
</dbReference>
<dbReference type="GO" id="GO:0005737">
    <property type="term" value="C:cytoplasm"/>
    <property type="evidence" value="ECO:0007669"/>
    <property type="project" value="UniProtKB-SubCell"/>
</dbReference>
<dbReference type="GO" id="GO:0008676">
    <property type="term" value="F:3-deoxy-8-phosphooctulonate synthase activity"/>
    <property type="evidence" value="ECO:0007669"/>
    <property type="project" value="UniProtKB-UniRule"/>
</dbReference>
<dbReference type="GO" id="GO:0019294">
    <property type="term" value="P:keto-3-deoxy-D-manno-octulosonic acid biosynthetic process"/>
    <property type="evidence" value="ECO:0007669"/>
    <property type="project" value="UniProtKB-UniRule"/>
</dbReference>
<dbReference type="Gene3D" id="3.20.20.70">
    <property type="entry name" value="Aldolase class I"/>
    <property type="match status" value="1"/>
</dbReference>
<dbReference type="HAMAP" id="MF_00056">
    <property type="entry name" value="KDO8P_synth"/>
    <property type="match status" value="1"/>
</dbReference>
<dbReference type="InterPro" id="IPR013785">
    <property type="entry name" value="Aldolase_TIM"/>
</dbReference>
<dbReference type="InterPro" id="IPR006218">
    <property type="entry name" value="DAHP1/KDSA"/>
</dbReference>
<dbReference type="InterPro" id="IPR006269">
    <property type="entry name" value="KDO8P_synthase"/>
</dbReference>
<dbReference type="NCBIfam" id="TIGR01362">
    <property type="entry name" value="KDO8P_synth"/>
    <property type="match status" value="1"/>
</dbReference>
<dbReference type="NCBIfam" id="NF003543">
    <property type="entry name" value="PRK05198.1"/>
    <property type="match status" value="1"/>
</dbReference>
<dbReference type="PANTHER" id="PTHR21057">
    <property type="entry name" value="PHOSPHO-2-DEHYDRO-3-DEOXYHEPTONATE ALDOLASE"/>
    <property type="match status" value="1"/>
</dbReference>
<dbReference type="Pfam" id="PF00793">
    <property type="entry name" value="DAHP_synth_1"/>
    <property type="match status" value="1"/>
</dbReference>
<dbReference type="SUPFAM" id="SSF51569">
    <property type="entry name" value="Aldolase"/>
    <property type="match status" value="1"/>
</dbReference>
<reference key="1">
    <citation type="journal article" date="2003" name="Nucleic Acids Res.">
        <title>Genome sequence of Chlamydophila caviae (Chlamydia psittaci GPIC): examining the role of niche-specific genes in the evolution of the Chlamydiaceae.</title>
        <authorList>
            <person name="Read T.D."/>
            <person name="Myers G.S.A."/>
            <person name="Brunham R.C."/>
            <person name="Nelson W.C."/>
            <person name="Paulsen I.T."/>
            <person name="Heidelberg J.F."/>
            <person name="Holtzapple E.K."/>
            <person name="Khouri H.M."/>
            <person name="Federova N.B."/>
            <person name="Carty H.A."/>
            <person name="Umayam L.A."/>
            <person name="Haft D.H."/>
            <person name="Peterson J.D."/>
            <person name="Beanan M.J."/>
            <person name="White O."/>
            <person name="Salzberg S.L."/>
            <person name="Hsia R.-C."/>
            <person name="McClarty G."/>
            <person name="Rank R.G."/>
            <person name="Bavoil P.M."/>
            <person name="Fraser C.M."/>
        </authorList>
    </citation>
    <scope>NUCLEOTIDE SEQUENCE [LARGE SCALE GENOMIC DNA]</scope>
    <source>
        <strain>ATCC VR-813 / DSM 19441 / 03DC25 / GPIC</strain>
    </source>
</reference>
<comment type="catalytic activity">
    <reaction evidence="1">
        <text>D-arabinose 5-phosphate + phosphoenolpyruvate + H2O = 3-deoxy-alpha-D-manno-2-octulosonate-8-phosphate + phosphate</text>
        <dbReference type="Rhea" id="RHEA:14053"/>
        <dbReference type="ChEBI" id="CHEBI:15377"/>
        <dbReference type="ChEBI" id="CHEBI:43474"/>
        <dbReference type="ChEBI" id="CHEBI:57693"/>
        <dbReference type="ChEBI" id="CHEBI:58702"/>
        <dbReference type="ChEBI" id="CHEBI:85985"/>
        <dbReference type="EC" id="2.5.1.55"/>
    </reaction>
</comment>
<comment type="pathway">
    <text evidence="1">Carbohydrate biosynthesis; 3-deoxy-D-manno-octulosonate biosynthesis; 3-deoxy-D-manno-octulosonate from D-ribulose 5-phosphate: step 2/3.</text>
</comment>
<comment type="pathway">
    <text evidence="1">Bacterial outer membrane biogenesis; lipopolysaccharide biosynthesis.</text>
</comment>
<comment type="subcellular location">
    <subcellularLocation>
        <location evidence="1">Cytoplasm</location>
    </subcellularLocation>
</comment>
<comment type="similarity">
    <text evidence="1">Belongs to the KdsA family.</text>
</comment>
<gene>
    <name evidence="1" type="primary">kdsA</name>
    <name type="ordered locus">CCA_00021</name>
</gene>
<organism>
    <name type="scientific">Chlamydia caviae (strain ATCC VR-813 / DSM 19441 / 03DC25 / GPIC)</name>
    <name type="common">Chlamydophila caviae</name>
    <dbReference type="NCBI Taxonomy" id="227941"/>
    <lineage>
        <taxon>Bacteria</taxon>
        <taxon>Pseudomonadati</taxon>
        <taxon>Chlamydiota</taxon>
        <taxon>Chlamydiia</taxon>
        <taxon>Chlamydiales</taxon>
        <taxon>Chlamydiaceae</taxon>
        <taxon>Chlamydia/Chlamydophila group</taxon>
        <taxon>Chlamydia</taxon>
    </lineage>
</organism>